<gene>
    <name type="primary">MDV050</name>
</gene>
<organism>
    <name type="scientific">Gallid herpesvirus 2 (strain Chicken/Md5/ATCC VR-987)</name>
    <name type="common">GaHV-2</name>
    <name type="synonym">Marek's disease herpesvirus type 1</name>
    <dbReference type="NCBI Taxonomy" id="10389"/>
    <lineage>
        <taxon>Viruses</taxon>
        <taxon>Duplodnaviria</taxon>
        <taxon>Heunggongvirae</taxon>
        <taxon>Peploviricota</taxon>
        <taxon>Herviviricetes</taxon>
        <taxon>Herpesvirales</taxon>
        <taxon>Orthoherpesviridae</taxon>
        <taxon>Alphaherpesvirinae</taxon>
        <taxon>Mardivirus</taxon>
        <taxon>Mardivirus gallidalpha2</taxon>
        <taxon>Gallid alphaherpesvirus 2</taxon>
    </lineage>
</organism>
<comment type="function">
    <text evidence="1">Plays an essential role in cytoplasmic secondary envelopment during viral egress. Interacts with the capsid via the large tegument protein/LTP and participates in its transport to the host trans-Golgi network (TGN) where secondary envelopment occurs. Modulates tegumentation and capsid accumulation at the viral assembly complex.</text>
</comment>
<comment type="subunit">
    <text evidence="1">Interacts (via C-terminus) with the large tegument protein/LTP (via N-terminus).</text>
</comment>
<comment type="subcellular location">
    <subcellularLocation>
        <location evidence="1">Virion tegument</location>
    </subcellularLocation>
    <subcellularLocation>
        <location evidence="1">Host cytoplasm</location>
    </subcellularLocation>
    <subcellularLocation>
        <location evidence="1">Host nucleus</location>
    </subcellularLocation>
    <subcellularLocation>
        <location evidence="1">Host Golgi apparatus</location>
        <location evidence="1">Host trans-Golgi network</location>
    </subcellularLocation>
</comment>
<comment type="similarity">
    <text evidence="1">Belongs to the herpesviridae inner tegument protein family.</text>
</comment>
<name>ITP_GAHVM</name>
<evidence type="ECO:0000255" key="1">
    <source>
        <dbReference type="HAMAP-Rule" id="MF_04043"/>
    </source>
</evidence>
<feature type="chain" id="PRO_0000406516" description="Inner tegument protein">
    <location>
        <begin position="1"/>
        <end position="1046"/>
    </location>
</feature>
<feature type="region of interest" description="Interaction with large tegument protein" evidence="1">
    <location>
        <begin position="543"/>
        <end position="1046"/>
    </location>
</feature>
<sequence>MSAVTTDEIWPLKVLLDTLRSLSSRTSPTEPWGATATAEARAAIGSFFLASGTMSILQVELTWRDTFSAILEVYKQTRSPEASMLAQNFVGLILWRISVRWDKTSWQENSHRLRRLVAEMTGEEAISWLSRNNLRISAPFGPSVMWPLISEWFAVFEDAANHAFTYTPEHLLSEREFSFNVGDLAASLAHKRFELIYDFPFVQEGIRLVSIASGWIAPFVIMYRCTTNRVFTPLTRILFTIALVDQYFRGLHAPQPFQIKDRFAEDVGALGSKELIPALEANSTKRTSYEVRASAAIAYESPFVHTIQPGMAADKLRNGSDIIMSDTSLTEDSLAIHLSAVLRLISDIGLEEDNGAIDAAKAKLSNSARRAWDAIQYSSSPKQLLEALIERGFVRQVCRAYESALKTYFTRNYGSVDEGDIFDDVQQVVGCVAVIGNVVFGLIESYGPGMTYLSNYMENCVISESDSHFIEALGLERAIISQIIGRCIPPIPHEDYIKAARAVLVAEMDHVASKSEAVGFRQSIRSAKESLMLWFDNRANEIWGIVPPDESNVLNLDANLPNSDYSNVDSNVEQDEFDGERESEMIRLASTIRYPEPMPITPESTTPHFLKYIIATVCLDALTSVTTAIFSTPRLGTALKVLTWARDYGMPYLDSFINHRGKLNALISAIIPFTQDISNAPTTDDALNIEMLLGELYDVISVAISMLPQEARPFLPPRPDPSNSNVLISMHGTALHLQLNYLAERTFDCVEHLSNKSKQLVVFASIFKDFFTCKFVSGISGGTVKLYHHSELHSSLGTWKIFDVMTAIRELYDSANNIIADIRLDSMKLRTIIEETGKQLLLCDDIMEQANALGQDAVKLFSVLGADFAGLTRLQNSLDLHIRKLTSCNTPPGMQDICWLLGRWSILSEINSTYRDRSSHELVSAIENVGGVLQDMMDHDLASIGTDDKSVAGEIEFAVESVMRDYPVITEDDTTLVVTLSSRHNLTHRDEINFCTLDIETIAPDDVDLTSFARDFITKQRVTADALVNIIDTVFNTGRRANGDNA</sequence>
<proteinExistence type="inferred from homology"/>
<organismHost>
    <name type="scientific">Gallus gallus</name>
    <name type="common">Chicken</name>
    <dbReference type="NCBI Taxonomy" id="9031"/>
</organismHost>
<dbReference type="EMBL" id="AF243438">
    <property type="protein sequence ID" value="AAG14230.1"/>
    <property type="molecule type" value="Genomic_DNA"/>
</dbReference>
<dbReference type="RefSeq" id="YP_001033966.1">
    <property type="nucleotide sequence ID" value="NC_002229.3"/>
</dbReference>
<dbReference type="SMR" id="Q9E6N2"/>
<dbReference type="GeneID" id="4811511"/>
<dbReference type="KEGG" id="vg:4811511"/>
<dbReference type="Proteomes" id="UP000008072">
    <property type="component" value="Segment"/>
</dbReference>
<dbReference type="GO" id="GO:0044177">
    <property type="term" value="C:host cell Golgi apparatus"/>
    <property type="evidence" value="ECO:0007669"/>
    <property type="project" value="UniProtKB-SubCell"/>
</dbReference>
<dbReference type="GO" id="GO:0042025">
    <property type="term" value="C:host cell nucleus"/>
    <property type="evidence" value="ECO:0007669"/>
    <property type="project" value="UniProtKB-SubCell"/>
</dbReference>
<dbReference type="GO" id="GO:0019033">
    <property type="term" value="C:viral tegument"/>
    <property type="evidence" value="ECO:0007669"/>
    <property type="project" value="UniProtKB-SubCell"/>
</dbReference>
<dbReference type="GO" id="GO:0019068">
    <property type="term" value="P:virion assembly"/>
    <property type="evidence" value="ECO:0007669"/>
    <property type="project" value="InterPro"/>
</dbReference>
<dbReference type="HAMAP" id="MF_04043">
    <property type="entry name" value="HSV_ITP"/>
    <property type="match status" value="1"/>
</dbReference>
<dbReference type="InterPro" id="IPR005655">
    <property type="entry name" value="Herpes_UL37"/>
</dbReference>
<dbReference type="InterPro" id="IPR034738">
    <property type="entry name" value="HSV_ITP"/>
</dbReference>
<dbReference type="Pfam" id="PF03970">
    <property type="entry name" value="Herpes_UL37_1"/>
    <property type="match status" value="1"/>
</dbReference>
<accession>Q9E6N2</accession>
<reference key="1">
    <citation type="journal article" date="2000" name="J. Virol.">
        <title>The genome of a very virulent Marek's disease virus.</title>
        <authorList>
            <person name="Tulman E.R."/>
            <person name="Afonso C.L."/>
            <person name="Lu Z."/>
            <person name="Zsak L."/>
            <person name="Rock D.L."/>
            <person name="Kutish G.F."/>
        </authorList>
    </citation>
    <scope>NUCLEOTIDE SEQUENCE [LARGE SCALE GENOMIC DNA]</scope>
</reference>
<keyword id="KW-1035">Host cytoplasm</keyword>
<keyword id="KW-1040">Host Golgi apparatus</keyword>
<keyword id="KW-1048">Host nucleus</keyword>
<keyword id="KW-1185">Reference proteome</keyword>
<keyword id="KW-0946">Virion</keyword>
<keyword id="KW-0920">Virion tegument</keyword>
<protein>
    <recommendedName>
        <fullName evidence="1">Inner tegument protein</fullName>
    </recommendedName>
</protein>